<name>SYC_SHESR</name>
<sequence>MPMLKIYNSITRQKQEFKPITPGKVGMYVCGVTVYDLCHIGHGRTFVSFDMIVRYLRYAGYEVNFQRNITDIDDKIIKRANENQEDCNTLTDRLIGEMHKDFDALNMIRPDFEPRATLHIAEIIDMVERLLARGHAYVAADGDVLFSVASFPEYGRLSGQNLEQLQAGARVEVDDNKQNPMDFVLWKMSKPGEPTWESPWGPGRPGWHIECSAMNSKHLGLHFDIHGGGSDLQFPHHENEIAQSCCAHDTPYVNYWMHTGMVMVDREKMSKSLGNFFTIRDVLGHYDPETVRYFLLSGHYRSQINYSEENLKQARAALERLYTAIKDVDLTVAPAPAEEFVAKFKAAMDDDFNTPEAYSVLFDMVREINRLKTTDMAQASAMAVAMKQLADVLGLLHQAPDAFFKGEGSDDEVAEIEALIVERNRARAEKDWPAADVARNRLNELGVVLEDGPSGTTWRKK</sequence>
<evidence type="ECO:0000255" key="1">
    <source>
        <dbReference type="HAMAP-Rule" id="MF_00041"/>
    </source>
</evidence>
<proteinExistence type="inferred from homology"/>
<feature type="chain" id="PRO_1000006611" description="Cysteine--tRNA ligase">
    <location>
        <begin position="1"/>
        <end position="461"/>
    </location>
</feature>
<feature type="short sequence motif" description="'HIGH' region">
    <location>
        <begin position="32"/>
        <end position="42"/>
    </location>
</feature>
<feature type="short sequence motif" description="'KMSKS' region">
    <location>
        <begin position="268"/>
        <end position="272"/>
    </location>
</feature>
<feature type="binding site" evidence="1">
    <location>
        <position position="30"/>
    </location>
    <ligand>
        <name>Zn(2+)</name>
        <dbReference type="ChEBI" id="CHEBI:29105"/>
    </ligand>
</feature>
<feature type="binding site" evidence="1">
    <location>
        <position position="211"/>
    </location>
    <ligand>
        <name>Zn(2+)</name>
        <dbReference type="ChEBI" id="CHEBI:29105"/>
    </ligand>
</feature>
<feature type="binding site" evidence="1">
    <location>
        <position position="236"/>
    </location>
    <ligand>
        <name>Zn(2+)</name>
        <dbReference type="ChEBI" id="CHEBI:29105"/>
    </ligand>
</feature>
<feature type="binding site" evidence="1">
    <location>
        <position position="240"/>
    </location>
    <ligand>
        <name>Zn(2+)</name>
        <dbReference type="ChEBI" id="CHEBI:29105"/>
    </ligand>
</feature>
<feature type="binding site" evidence="1">
    <location>
        <position position="271"/>
    </location>
    <ligand>
        <name>ATP</name>
        <dbReference type="ChEBI" id="CHEBI:30616"/>
    </ligand>
</feature>
<gene>
    <name evidence="1" type="primary">cysS</name>
    <name type="ordered locus">Shewmr7_2566</name>
</gene>
<protein>
    <recommendedName>
        <fullName evidence="1">Cysteine--tRNA ligase</fullName>
        <ecNumber evidence="1">6.1.1.16</ecNumber>
    </recommendedName>
    <alternativeName>
        <fullName evidence="1">Cysteinyl-tRNA synthetase</fullName>
        <shortName evidence="1">CysRS</shortName>
    </alternativeName>
</protein>
<reference key="1">
    <citation type="submission" date="2006-08" db="EMBL/GenBank/DDBJ databases">
        <title>Complete sequence of chromosome 1 of Shewanella sp. MR-7.</title>
        <authorList>
            <person name="Copeland A."/>
            <person name="Lucas S."/>
            <person name="Lapidus A."/>
            <person name="Barry K."/>
            <person name="Detter J.C."/>
            <person name="Glavina del Rio T."/>
            <person name="Hammon N."/>
            <person name="Israni S."/>
            <person name="Dalin E."/>
            <person name="Tice H."/>
            <person name="Pitluck S."/>
            <person name="Kiss H."/>
            <person name="Brettin T."/>
            <person name="Bruce D."/>
            <person name="Han C."/>
            <person name="Tapia R."/>
            <person name="Gilna P."/>
            <person name="Schmutz J."/>
            <person name="Larimer F."/>
            <person name="Land M."/>
            <person name="Hauser L."/>
            <person name="Kyrpides N."/>
            <person name="Mikhailova N."/>
            <person name="Nealson K."/>
            <person name="Konstantinidis K."/>
            <person name="Klappenbach J."/>
            <person name="Tiedje J."/>
            <person name="Richardson P."/>
        </authorList>
    </citation>
    <scope>NUCLEOTIDE SEQUENCE [LARGE SCALE GENOMIC DNA]</scope>
    <source>
        <strain>MR-7</strain>
    </source>
</reference>
<keyword id="KW-0030">Aminoacyl-tRNA synthetase</keyword>
<keyword id="KW-0067">ATP-binding</keyword>
<keyword id="KW-0963">Cytoplasm</keyword>
<keyword id="KW-0436">Ligase</keyword>
<keyword id="KW-0479">Metal-binding</keyword>
<keyword id="KW-0547">Nucleotide-binding</keyword>
<keyword id="KW-0648">Protein biosynthesis</keyword>
<keyword id="KW-0862">Zinc</keyword>
<organism>
    <name type="scientific">Shewanella sp. (strain MR-7)</name>
    <dbReference type="NCBI Taxonomy" id="60481"/>
    <lineage>
        <taxon>Bacteria</taxon>
        <taxon>Pseudomonadati</taxon>
        <taxon>Pseudomonadota</taxon>
        <taxon>Gammaproteobacteria</taxon>
        <taxon>Alteromonadales</taxon>
        <taxon>Shewanellaceae</taxon>
        <taxon>Shewanella</taxon>
    </lineage>
</organism>
<comment type="catalytic activity">
    <reaction evidence="1">
        <text>tRNA(Cys) + L-cysteine + ATP = L-cysteinyl-tRNA(Cys) + AMP + diphosphate</text>
        <dbReference type="Rhea" id="RHEA:17773"/>
        <dbReference type="Rhea" id="RHEA-COMP:9661"/>
        <dbReference type="Rhea" id="RHEA-COMP:9679"/>
        <dbReference type="ChEBI" id="CHEBI:30616"/>
        <dbReference type="ChEBI" id="CHEBI:33019"/>
        <dbReference type="ChEBI" id="CHEBI:35235"/>
        <dbReference type="ChEBI" id="CHEBI:78442"/>
        <dbReference type="ChEBI" id="CHEBI:78517"/>
        <dbReference type="ChEBI" id="CHEBI:456215"/>
        <dbReference type="EC" id="6.1.1.16"/>
    </reaction>
</comment>
<comment type="cofactor">
    <cofactor evidence="1">
        <name>Zn(2+)</name>
        <dbReference type="ChEBI" id="CHEBI:29105"/>
    </cofactor>
    <text evidence="1">Binds 1 zinc ion per subunit.</text>
</comment>
<comment type="subunit">
    <text evidence="1">Monomer.</text>
</comment>
<comment type="subcellular location">
    <subcellularLocation>
        <location evidence="1">Cytoplasm</location>
    </subcellularLocation>
</comment>
<comment type="similarity">
    <text evidence="1">Belongs to the class-I aminoacyl-tRNA synthetase family.</text>
</comment>
<dbReference type="EC" id="6.1.1.16" evidence="1"/>
<dbReference type="EMBL" id="CP000444">
    <property type="protein sequence ID" value="ABI43551.1"/>
    <property type="molecule type" value="Genomic_DNA"/>
</dbReference>
<dbReference type="SMR" id="Q0HTK4"/>
<dbReference type="KEGG" id="shm:Shewmr7_2566"/>
<dbReference type="HOGENOM" id="CLU_013528_0_1_6"/>
<dbReference type="GO" id="GO:0005829">
    <property type="term" value="C:cytosol"/>
    <property type="evidence" value="ECO:0007669"/>
    <property type="project" value="TreeGrafter"/>
</dbReference>
<dbReference type="GO" id="GO:0005524">
    <property type="term" value="F:ATP binding"/>
    <property type="evidence" value="ECO:0007669"/>
    <property type="project" value="UniProtKB-UniRule"/>
</dbReference>
<dbReference type="GO" id="GO:0004817">
    <property type="term" value="F:cysteine-tRNA ligase activity"/>
    <property type="evidence" value="ECO:0007669"/>
    <property type="project" value="UniProtKB-UniRule"/>
</dbReference>
<dbReference type="GO" id="GO:0008270">
    <property type="term" value="F:zinc ion binding"/>
    <property type="evidence" value="ECO:0007669"/>
    <property type="project" value="UniProtKB-UniRule"/>
</dbReference>
<dbReference type="GO" id="GO:0006423">
    <property type="term" value="P:cysteinyl-tRNA aminoacylation"/>
    <property type="evidence" value="ECO:0007669"/>
    <property type="project" value="UniProtKB-UniRule"/>
</dbReference>
<dbReference type="CDD" id="cd07963">
    <property type="entry name" value="Anticodon_Ia_Cys"/>
    <property type="match status" value="1"/>
</dbReference>
<dbReference type="CDD" id="cd00672">
    <property type="entry name" value="CysRS_core"/>
    <property type="match status" value="1"/>
</dbReference>
<dbReference type="FunFam" id="1.20.120.1910:FF:000001">
    <property type="entry name" value="Cysteine--tRNA ligase"/>
    <property type="match status" value="1"/>
</dbReference>
<dbReference type="FunFam" id="3.40.50.620:FF:000009">
    <property type="entry name" value="Cysteine--tRNA ligase"/>
    <property type="match status" value="1"/>
</dbReference>
<dbReference type="Gene3D" id="1.20.120.1910">
    <property type="entry name" value="Cysteine-tRNA ligase, C-terminal anti-codon recognition domain"/>
    <property type="match status" value="1"/>
</dbReference>
<dbReference type="Gene3D" id="3.40.50.620">
    <property type="entry name" value="HUPs"/>
    <property type="match status" value="1"/>
</dbReference>
<dbReference type="HAMAP" id="MF_00041">
    <property type="entry name" value="Cys_tRNA_synth"/>
    <property type="match status" value="1"/>
</dbReference>
<dbReference type="InterPro" id="IPR015803">
    <property type="entry name" value="Cys-tRNA-ligase"/>
</dbReference>
<dbReference type="InterPro" id="IPR015273">
    <property type="entry name" value="Cys-tRNA-synt_Ia_DALR"/>
</dbReference>
<dbReference type="InterPro" id="IPR024909">
    <property type="entry name" value="Cys-tRNA/MSH_ligase"/>
</dbReference>
<dbReference type="InterPro" id="IPR056411">
    <property type="entry name" value="CysS_C"/>
</dbReference>
<dbReference type="InterPro" id="IPR014729">
    <property type="entry name" value="Rossmann-like_a/b/a_fold"/>
</dbReference>
<dbReference type="InterPro" id="IPR032678">
    <property type="entry name" value="tRNA-synt_1_cat_dom"/>
</dbReference>
<dbReference type="InterPro" id="IPR009080">
    <property type="entry name" value="tRNAsynth_Ia_anticodon-bd"/>
</dbReference>
<dbReference type="NCBIfam" id="TIGR00435">
    <property type="entry name" value="cysS"/>
    <property type="match status" value="1"/>
</dbReference>
<dbReference type="PANTHER" id="PTHR10890:SF3">
    <property type="entry name" value="CYSTEINE--TRNA LIGASE, CYTOPLASMIC"/>
    <property type="match status" value="1"/>
</dbReference>
<dbReference type="PANTHER" id="PTHR10890">
    <property type="entry name" value="CYSTEINYL-TRNA SYNTHETASE"/>
    <property type="match status" value="1"/>
</dbReference>
<dbReference type="Pfam" id="PF23493">
    <property type="entry name" value="CysS_C"/>
    <property type="match status" value="1"/>
</dbReference>
<dbReference type="Pfam" id="PF09190">
    <property type="entry name" value="DALR_2"/>
    <property type="match status" value="1"/>
</dbReference>
<dbReference type="Pfam" id="PF01406">
    <property type="entry name" value="tRNA-synt_1e"/>
    <property type="match status" value="1"/>
</dbReference>
<dbReference type="PRINTS" id="PR00983">
    <property type="entry name" value="TRNASYNTHCYS"/>
</dbReference>
<dbReference type="SMART" id="SM00840">
    <property type="entry name" value="DALR_2"/>
    <property type="match status" value="1"/>
</dbReference>
<dbReference type="SUPFAM" id="SSF47323">
    <property type="entry name" value="Anticodon-binding domain of a subclass of class I aminoacyl-tRNA synthetases"/>
    <property type="match status" value="1"/>
</dbReference>
<dbReference type="SUPFAM" id="SSF52374">
    <property type="entry name" value="Nucleotidylyl transferase"/>
    <property type="match status" value="1"/>
</dbReference>
<accession>Q0HTK4</accession>